<sequence length="667" mass="76625">MTAFQLQAPFQPTGDQPAAIDQLVDSLQNQHRFQTLLGATGTGKTFTIAAVIEKIGRPTLVLAHNKTLAAQLCNELRQFFPNNAVEYFISYYDYYQPEAYIPVSDTYIEKSSSINDEIDMLRHSATRSLFERRDVIVVASISCIYGLGMPAEYLKAAISLTVGQEFDQRQLLRALVSVQYNRNDLELTRGRFRLKGDILEIVPAYEDRVIKIDFFGDEIESIRYLDPLTGEVLQKLERISIYPARHFVTPEERLEVACRDIKTELDNRLLELEKAGKLLEAQRLDQRTRYDLEMLQEVGYCNGVENYSRHLAGRLAGEPPECLVDYFPEDWLLVVDESHVSVPQIRGMYNGDQSRKKVLIDHGFRLPSAADNRPLKSEEFWQKVNQCIFVSATPGDWELEQSENRIVEQIIRPTGVLDPEIFVRPTEGQVDDLLGEIKERVQLNERVLITTLTKRMAEDLTEYLQERGIKVRYLHSEIQSIQRIEIIQDLREGVFDVLIGVNLLREGLDLPEVSLVAILDADKEGFLRATRSLIQTIGRAARHIRGQAILYGDNLTDSMINAIEETKRRRAIQQEYNQKHGIIPQPIVKRSSNSILAFLDISRRLNSQQLEQVCENIEELSLEQIPELIQQLEAQMKEAAKNLEFESAAKYRDRIKQLRDKLLNHVR</sequence>
<keyword id="KW-0067">ATP-binding</keyword>
<keyword id="KW-0963">Cytoplasm</keyword>
<keyword id="KW-0227">DNA damage</keyword>
<keyword id="KW-0228">DNA excision</keyword>
<keyword id="KW-0234">DNA repair</keyword>
<keyword id="KW-0267">Excision nuclease</keyword>
<keyword id="KW-0347">Helicase</keyword>
<keyword id="KW-0378">Hydrolase</keyword>
<keyword id="KW-0547">Nucleotide-binding</keyword>
<keyword id="KW-0742">SOS response</keyword>
<accession>B0JR86</accession>
<organism>
    <name type="scientific">Microcystis aeruginosa (strain NIES-843 / IAM M-2473)</name>
    <dbReference type="NCBI Taxonomy" id="449447"/>
    <lineage>
        <taxon>Bacteria</taxon>
        <taxon>Bacillati</taxon>
        <taxon>Cyanobacteriota</taxon>
        <taxon>Cyanophyceae</taxon>
        <taxon>Oscillatoriophycideae</taxon>
        <taxon>Chroococcales</taxon>
        <taxon>Microcystaceae</taxon>
        <taxon>Microcystis</taxon>
    </lineage>
</organism>
<feature type="chain" id="PRO_1000077906" description="UvrABC system protein B">
    <location>
        <begin position="1"/>
        <end position="667"/>
    </location>
</feature>
<feature type="domain" description="Helicase ATP-binding" evidence="1">
    <location>
        <begin position="25"/>
        <end position="180"/>
    </location>
</feature>
<feature type="domain" description="Helicase C-terminal" evidence="1">
    <location>
        <begin position="429"/>
        <end position="595"/>
    </location>
</feature>
<feature type="domain" description="UVR" evidence="1">
    <location>
        <begin position="626"/>
        <end position="661"/>
    </location>
</feature>
<feature type="short sequence motif" description="Beta-hairpin">
    <location>
        <begin position="91"/>
        <end position="114"/>
    </location>
</feature>
<feature type="binding site" evidence="1">
    <location>
        <begin position="38"/>
        <end position="45"/>
    </location>
    <ligand>
        <name>ATP</name>
        <dbReference type="ChEBI" id="CHEBI:30616"/>
    </ligand>
</feature>
<comment type="function">
    <text evidence="1">The UvrABC repair system catalyzes the recognition and processing of DNA lesions. A damage recognition complex composed of 2 UvrA and 2 UvrB subunits scans DNA for abnormalities. Upon binding of the UvrA(2)B(2) complex to a putative damaged site, the DNA wraps around one UvrB monomer. DNA wrap is dependent on ATP binding by UvrB and probably causes local melting of the DNA helix, facilitating insertion of UvrB beta-hairpin between the DNA strands. Then UvrB probes one DNA strand for the presence of a lesion. If a lesion is found the UvrA subunits dissociate and the UvrB-DNA preincision complex is formed. This complex is subsequently bound by UvrC and the second UvrB is released. If no lesion is found, the DNA wraps around the other UvrB subunit that will check the other stand for damage.</text>
</comment>
<comment type="subunit">
    <text evidence="1">Forms a heterotetramer with UvrA during the search for lesions. Interacts with UvrC in an incision complex.</text>
</comment>
<comment type="subcellular location">
    <subcellularLocation>
        <location evidence="1">Cytoplasm</location>
    </subcellularLocation>
</comment>
<comment type="domain">
    <text evidence="1">The beta-hairpin motif is involved in DNA binding.</text>
</comment>
<comment type="similarity">
    <text evidence="1">Belongs to the UvrB family.</text>
</comment>
<gene>
    <name evidence="1" type="primary">uvrB</name>
    <name type="ordered locus">MAE_41330</name>
</gene>
<proteinExistence type="inferred from homology"/>
<dbReference type="EMBL" id="AP009552">
    <property type="protein sequence ID" value="BAG03955.1"/>
    <property type="molecule type" value="Genomic_DNA"/>
</dbReference>
<dbReference type="RefSeq" id="WP_012266824.1">
    <property type="nucleotide sequence ID" value="NC_010296.1"/>
</dbReference>
<dbReference type="SMR" id="B0JR86"/>
<dbReference type="STRING" id="449447.MAE_41330"/>
<dbReference type="PaxDb" id="449447-MAE_41330"/>
<dbReference type="EnsemblBacteria" id="BAG03955">
    <property type="protein sequence ID" value="BAG03955"/>
    <property type="gene ID" value="MAE_41330"/>
</dbReference>
<dbReference type="KEGG" id="mar:MAE_41330"/>
<dbReference type="PATRIC" id="fig|449447.4.peg.3739"/>
<dbReference type="eggNOG" id="COG0556">
    <property type="taxonomic scope" value="Bacteria"/>
</dbReference>
<dbReference type="HOGENOM" id="CLU_009621_2_1_3"/>
<dbReference type="BioCyc" id="MAER449447:MAE_RS17905-MONOMER"/>
<dbReference type="Proteomes" id="UP000001510">
    <property type="component" value="Chromosome"/>
</dbReference>
<dbReference type="GO" id="GO:0005737">
    <property type="term" value="C:cytoplasm"/>
    <property type="evidence" value="ECO:0007669"/>
    <property type="project" value="UniProtKB-SubCell"/>
</dbReference>
<dbReference type="GO" id="GO:0009380">
    <property type="term" value="C:excinuclease repair complex"/>
    <property type="evidence" value="ECO:0007669"/>
    <property type="project" value="InterPro"/>
</dbReference>
<dbReference type="GO" id="GO:0005524">
    <property type="term" value="F:ATP binding"/>
    <property type="evidence" value="ECO:0007669"/>
    <property type="project" value="UniProtKB-UniRule"/>
</dbReference>
<dbReference type="GO" id="GO:0016887">
    <property type="term" value="F:ATP hydrolysis activity"/>
    <property type="evidence" value="ECO:0007669"/>
    <property type="project" value="InterPro"/>
</dbReference>
<dbReference type="GO" id="GO:0003677">
    <property type="term" value="F:DNA binding"/>
    <property type="evidence" value="ECO:0007669"/>
    <property type="project" value="UniProtKB-UniRule"/>
</dbReference>
<dbReference type="GO" id="GO:0009381">
    <property type="term" value="F:excinuclease ABC activity"/>
    <property type="evidence" value="ECO:0007669"/>
    <property type="project" value="UniProtKB-UniRule"/>
</dbReference>
<dbReference type="GO" id="GO:0004386">
    <property type="term" value="F:helicase activity"/>
    <property type="evidence" value="ECO:0007669"/>
    <property type="project" value="UniProtKB-KW"/>
</dbReference>
<dbReference type="GO" id="GO:0006289">
    <property type="term" value="P:nucleotide-excision repair"/>
    <property type="evidence" value="ECO:0007669"/>
    <property type="project" value="UniProtKB-UniRule"/>
</dbReference>
<dbReference type="GO" id="GO:0009432">
    <property type="term" value="P:SOS response"/>
    <property type="evidence" value="ECO:0007669"/>
    <property type="project" value="UniProtKB-UniRule"/>
</dbReference>
<dbReference type="CDD" id="cd17916">
    <property type="entry name" value="DEXHc_UvrB"/>
    <property type="match status" value="1"/>
</dbReference>
<dbReference type="CDD" id="cd18790">
    <property type="entry name" value="SF2_C_UvrB"/>
    <property type="match status" value="1"/>
</dbReference>
<dbReference type="Gene3D" id="3.40.50.300">
    <property type="entry name" value="P-loop containing nucleotide triphosphate hydrolases"/>
    <property type="match status" value="3"/>
</dbReference>
<dbReference type="Gene3D" id="4.10.860.10">
    <property type="entry name" value="UVR domain"/>
    <property type="match status" value="1"/>
</dbReference>
<dbReference type="HAMAP" id="MF_00204">
    <property type="entry name" value="UvrB"/>
    <property type="match status" value="1"/>
</dbReference>
<dbReference type="InterPro" id="IPR006935">
    <property type="entry name" value="Helicase/UvrB_N"/>
</dbReference>
<dbReference type="InterPro" id="IPR014001">
    <property type="entry name" value="Helicase_ATP-bd"/>
</dbReference>
<dbReference type="InterPro" id="IPR001650">
    <property type="entry name" value="Helicase_C-like"/>
</dbReference>
<dbReference type="InterPro" id="IPR027417">
    <property type="entry name" value="P-loop_NTPase"/>
</dbReference>
<dbReference type="InterPro" id="IPR001943">
    <property type="entry name" value="UVR_dom"/>
</dbReference>
<dbReference type="InterPro" id="IPR036876">
    <property type="entry name" value="UVR_dom_sf"/>
</dbReference>
<dbReference type="InterPro" id="IPR004807">
    <property type="entry name" value="UvrB"/>
</dbReference>
<dbReference type="InterPro" id="IPR041471">
    <property type="entry name" value="UvrB_inter"/>
</dbReference>
<dbReference type="InterPro" id="IPR024759">
    <property type="entry name" value="UvrB_YAD/RRR_dom"/>
</dbReference>
<dbReference type="NCBIfam" id="NF003673">
    <property type="entry name" value="PRK05298.1"/>
    <property type="match status" value="1"/>
</dbReference>
<dbReference type="NCBIfam" id="TIGR00631">
    <property type="entry name" value="uvrb"/>
    <property type="match status" value="1"/>
</dbReference>
<dbReference type="PANTHER" id="PTHR24029">
    <property type="entry name" value="UVRABC SYSTEM PROTEIN B"/>
    <property type="match status" value="1"/>
</dbReference>
<dbReference type="PANTHER" id="PTHR24029:SF0">
    <property type="entry name" value="UVRABC SYSTEM PROTEIN B"/>
    <property type="match status" value="1"/>
</dbReference>
<dbReference type="Pfam" id="PF00271">
    <property type="entry name" value="Helicase_C"/>
    <property type="match status" value="1"/>
</dbReference>
<dbReference type="Pfam" id="PF04851">
    <property type="entry name" value="ResIII"/>
    <property type="match status" value="1"/>
</dbReference>
<dbReference type="Pfam" id="PF02151">
    <property type="entry name" value="UVR"/>
    <property type="match status" value="1"/>
</dbReference>
<dbReference type="Pfam" id="PF12344">
    <property type="entry name" value="UvrB"/>
    <property type="match status" value="1"/>
</dbReference>
<dbReference type="Pfam" id="PF17757">
    <property type="entry name" value="UvrB_inter"/>
    <property type="match status" value="1"/>
</dbReference>
<dbReference type="SMART" id="SM00487">
    <property type="entry name" value="DEXDc"/>
    <property type="match status" value="1"/>
</dbReference>
<dbReference type="SMART" id="SM00490">
    <property type="entry name" value="HELICc"/>
    <property type="match status" value="1"/>
</dbReference>
<dbReference type="SUPFAM" id="SSF46600">
    <property type="entry name" value="C-terminal UvrC-binding domain of UvrB"/>
    <property type="match status" value="1"/>
</dbReference>
<dbReference type="SUPFAM" id="SSF52540">
    <property type="entry name" value="P-loop containing nucleoside triphosphate hydrolases"/>
    <property type="match status" value="2"/>
</dbReference>
<dbReference type="PROSITE" id="PS51192">
    <property type="entry name" value="HELICASE_ATP_BIND_1"/>
    <property type="match status" value="1"/>
</dbReference>
<dbReference type="PROSITE" id="PS51194">
    <property type="entry name" value="HELICASE_CTER"/>
    <property type="match status" value="1"/>
</dbReference>
<dbReference type="PROSITE" id="PS50151">
    <property type="entry name" value="UVR"/>
    <property type="match status" value="1"/>
</dbReference>
<protein>
    <recommendedName>
        <fullName evidence="1">UvrABC system protein B</fullName>
        <shortName evidence="1">Protein UvrB</shortName>
    </recommendedName>
    <alternativeName>
        <fullName evidence="1">Excinuclease ABC subunit B</fullName>
    </alternativeName>
</protein>
<reference key="1">
    <citation type="journal article" date="2007" name="DNA Res.">
        <title>Complete genomic structure of the bloom-forming toxic cyanobacterium Microcystis aeruginosa NIES-843.</title>
        <authorList>
            <person name="Kaneko T."/>
            <person name="Nakajima N."/>
            <person name="Okamoto S."/>
            <person name="Suzuki I."/>
            <person name="Tanabe Y."/>
            <person name="Tamaoki M."/>
            <person name="Nakamura Y."/>
            <person name="Kasai F."/>
            <person name="Watanabe A."/>
            <person name="Kawashima K."/>
            <person name="Kishida Y."/>
            <person name="Ono A."/>
            <person name="Shimizu Y."/>
            <person name="Takahashi C."/>
            <person name="Minami C."/>
            <person name="Fujishiro T."/>
            <person name="Kohara M."/>
            <person name="Katoh M."/>
            <person name="Nakazaki N."/>
            <person name="Nakayama S."/>
            <person name="Yamada M."/>
            <person name="Tabata S."/>
            <person name="Watanabe M.M."/>
        </authorList>
    </citation>
    <scope>NUCLEOTIDE SEQUENCE [LARGE SCALE GENOMIC DNA]</scope>
    <source>
        <strain>NIES-843 / IAM M-247</strain>
    </source>
</reference>
<evidence type="ECO:0000255" key="1">
    <source>
        <dbReference type="HAMAP-Rule" id="MF_00204"/>
    </source>
</evidence>
<name>UVRB_MICAN</name>